<sequence length="261" mass="28690">MRFLILFLALSLGEIDAAPPVQSRIVGGFNCEKNSQPWHVAVFRYNKYICGGVLLNPNWVLTAAHCYGNQYNVWLGKNKLFQHESSAQHRLVSKSFPHPDYNMSLMNDHTPHPEDDYSNDLMLLRLSKPADITDAVKPIDLPTEEPKLGSTCLASGWGSITPTKWQIPNDLQCGFIKPLPNENCAKAYIHKVTDVMLCAGEMGGGKDTCAGDSGGPLICDGVLQGITSWGSIPCAKPNAPAIYTKLIKFTSWIKDTMAKNP</sequence>
<keyword id="KW-1015">Disulfide bond</keyword>
<keyword id="KW-0325">Glycoprotein</keyword>
<keyword id="KW-0378">Hydrolase</keyword>
<keyword id="KW-0645">Protease</keyword>
<keyword id="KW-1185">Reference proteome</keyword>
<keyword id="KW-0720">Serine protease</keyword>
<keyword id="KW-0732">Signal</keyword>
<keyword id="KW-0865">Zymogen</keyword>
<gene>
    <name type="primary">Klk1b21</name>
    <name type="synonym">Klk-21</name>
    <name type="synonym">Klk21</name>
</gene>
<feature type="signal peptide" evidence="2">
    <location>
        <begin position="1"/>
        <end position="17"/>
    </location>
</feature>
<feature type="propeptide" id="PRO_0000027987" description="Activation peptide" evidence="1">
    <location>
        <begin position="18"/>
        <end position="24"/>
    </location>
</feature>
<feature type="chain" id="PRO_0000027988" description="Kallikrein 1-related peptidase b21">
    <location>
        <begin position="25"/>
        <end position="261"/>
    </location>
</feature>
<feature type="domain" description="Peptidase S1" evidence="3">
    <location>
        <begin position="25"/>
        <end position="258"/>
    </location>
</feature>
<feature type="active site" description="Charge relay system" evidence="1">
    <location>
        <position position="65"/>
    </location>
</feature>
<feature type="active site" description="Charge relay system" evidence="1">
    <location>
        <position position="120"/>
    </location>
</feature>
<feature type="active site" description="Charge relay system" evidence="1">
    <location>
        <position position="213"/>
    </location>
</feature>
<feature type="glycosylation site" description="N-linked (GlcNAc...) asparagine" evidence="2">
    <location>
        <position position="102"/>
    </location>
</feature>
<feature type="disulfide bond" evidence="1 3">
    <location>
        <begin position="31"/>
        <end position="173"/>
    </location>
</feature>
<feature type="disulfide bond" evidence="1 3">
    <location>
        <begin position="50"/>
        <end position="66"/>
    </location>
</feature>
<feature type="disulfide bond" evidence="1 3">
    <location>
        <begin position="152"/>
        <end position="219"/>
    </location>
</feature>
<feature type="disulfide bond" evidence="1 3">
    <location>
        <begin position="184"/>
        <end position="198"/>
    </location>
</feature>
<feature type="disulfide bond" evidence="1 3">
    <location>
        <begin position="209"/>
        <end position="234"/>
    </location>
</feature>
<protein>
    <recommendedName>
        <fullName>Kallikrein 1-related peptidase b21</fullName>
        <ecNumber>3.4.21.35</ecNumber>
    </recommendedName>
    <alternativeName>
        <fullName>Glandular kallikrein K21</fullName>
        <shortName>mGK-21</shortName>
    </alternativeName>
    <alternativeName>
        <fullName>Tissue kallikrein 21</fullName>
    </alternativeName>
</protein>
<comment type="function">
    <text evidence="5">Glandular kallikreins cleave Met-Lys and Arg-Ser bonds in kininogen to release Lys-bradykinin. Displays trypsin-like substrate specificity and shows activity towards casein, gelatin, fibronectin and IGFBP3.</text>
</comment>
<comment type="catalytic activity">
    <reaction evidence="7">
        <text>Preferential cleavage of Arg-|-Xaa bonds in small molecule substrates. Highly selective action to release kallidin (lysyl-bradykinin) from kininogen involves hydrolysis of Met-|-Xaa or Leu-|-Xaa.</text>
        <dbReference type="EC" id="3.4.21.35"/>
    </reaction>
</comment>
<comment type="activity regulation">
    <text evidence="5">Inhibited by protease inhibitors diisopropylfluorophosphate, leupeptin, antipain, benzamidine, phenylmethylsulfonyl fluoride and soybean trypsin inhibitor.</text>
</comment>
<comment type="tissue specificity">
    <text evidence="5">Expressed in testis and submaxillary gland. In the testis, expression localized specifically to Leydig cells in the interstitial tissues.</text>
</comment>
<comment type="developmental stage">
    <text evidence="5">Detectable in testis 4 weeks after birth, becoming more prominent thereafter.</text>
</comment>
<comment type="induction">
    <text evidence="5">By T protein.</text>
</comment>
<comment type="similarity">
    <text evidence="3">Belongs to the peptidase S1 family. Kallikrein subfamily.</text>
</comment>
<organism evidence="9">
    <name type="scientific">Mus musculus</name>
    <name type="common">Mouse</name>
    <dbReference type="NCBI Taxonomy" id="10090"/>
    <lineage>
        <taxon>Eukaryota</taxon>
        <taxon>Metazoa</taxon>
        <taxon>Chordata</taxon>
        <taxon>Craniata</taxon>
        <taxon>Vertebrata</taxon>
        <taxon>Euteleostomi</taxon>
        <taxon>Mammalia</taxon>
        <taxon>Eutheria</taxon>
        <taxon>Euarchontoglires</taxon>
        <taxon>Glires</taxon>
        <taxon>Rodentia</taxon>
        <taxon>Myomorpha</taxon>
        <taxon>Muroidea</taxon>
        <taxon>Muridae</taxon>
        <taxon>Murinae</taxon>
        <taxon>Mus</taxon>
        <taxon>Mus</taxon>
    </lineage>
</organism>
<evidence type="ECO:0000250" key="1">
    <source>
        <dbReference type="UniProtKB" id="P36368"/>
    </source>
</evidence>
<evidence type="ECO:0000255" key="2"/>
<evidence type="ECO:0000255" key="3">
    <source>
        <dbReference type="PROSITE-ProRule" id="PRU00274"/>
    </source>
</evidence>
<evidence type="ECO:0000269" key="4">
    <source>
    </source>
</evidence>
<evidence type="ECO:0000269" key="5">
    <source>
    </source>
</evidence>
<evidence type="ECO:0000269" key="6">
    <source>
    </source>
</evidence>
<evidence type="ECO:0000305" key="7"/>
<evidence type="ECO:0000312" key="8">
    <source>
        <dbReference type="EMBL" id="AAH12243.1"/>
    </source>
</evidence>
<evidence type="ECO:0000312" key="9">
    <source>
        <dbReference type="EMBL" id="BAA92319.1"/>
    </source>
</evidence>
<accession>Q61759</accession>
<accession>Q61760</accession>
<accession>Q9JM70</accession>
<dbReference type="EC" id="3.4.21.35"/>
<dbReference type="EMBL" id="AB039276">
    <property type="protein sequence ID" value="BAA92319.1"/>
    <property type="molecule type" value="mRNA"/>
</dbReference>
<dbReference type="EMBL" id="BC012243">
    <property type="protein sequence ID" value="AAH12243.1"/>
    <property type="molecule type" value="mRNA"/>
</dbReference>
<dbReference type="EMBL" id="M18597">
    <property type="protein sequence ID" value="AAA39359.1"/>
    <property type="molecule type" value="Genomic_DNA"/>
</dbReference>
<dbReference type="EMBL" id="M18617">
    <property type="protein sequence ID" value="AAA39360.1"/>
    <property type="molecule type" value="Genomic_DNA"/>
</dbReference>
<dbReference type="CCDS" id="CCDS21195.1"/>
<dbReference type="PIR" id="I70036">
    <property type="entry name" value="I70036"/>
</dbReference>
<dbReference type="PIR" id="I70037">
    <property type="entry name" value="I70037"/>
</dbReference>
<dbReference type="RefSeq" id="NP_034772.1">
    <property type="nucleotide sequence ID" value="NM_010642.4"/>
</dbReference>
<dbReference type="SMR" id="Q61759"/>
<dbReference type="FunCoup" id="Q61759">
    <property type="interactions" value="83"/>
</dbReference>
<dbReference type="STRING" id="10090.ENSMUSP00000082582"/>
<dbReference type="MEROPS" id="S01.038"/>
<dbReference type="GlyCosmos" id="Q61759">
    <property type="glycosylation" value="1 site, No reported glycans"/>
</dbReference>
<dbReference type="GlyGen" id="Q61759">
    <property type="glycosylation" value="1 site"/>
</dbReference>
<dbReference type="PaxDb" id="10090-ENSMUSP00000082582"/>
<dbReference type="ProteomicsDB" id="268930"/>
<dbReference type="DNASU" id="16616"/>
<dbReference type="Ensembl" id="ENSMUST00000085455.6">
    <property type="protein sequence ID" value="ENSMUSP00000082582.5"/>
    <property type="gene ID" value="ENSMUSG00000066516.6"/>
</dbReference>
<dbReference type="GeneID" id="16616"/>
<dbReference type="KEGG" id="mmu:16616"/>
<dbReference type="UCSC" id="uc009goh.1">
    <property type="organism name" value="mouse"/>
</dbReference>
<dbReference type="AGR" id="MGI:892022"/>
<dbReference type="CTD" id="16616"/>
<dbReference type="MGI" id="MGI:892022">
    <property type="gene designation" value="Klk1b21"/>
</dbReference>
<dbReference type="VEuPathDB" id="HostDB:ENSMUSG00000066516"/>
<dbReference type="eggNOG" id="KOG3627">
    <property type="taxonomic scope" value="Eukaryota"/>
</dbReference>
<dbReference type="GeneTree" id="ENSGT01020000230389"/>
<dbReference type="HOGENOM" id="CLU_006842_1_1_1"/>
<dbReference type="InParanoid" id="Q61759"/>
<dbReference type="OMA" id="LAFVEWI"/>
<dbReference type="OrthoDB" id="10061449at2759"/>
<dbReference type="PhylomeDB" id="Q61759"/>
<dbReference type="TreeFam" id="TF331065"/>
<dbReference type="Reactome" id="R-MMU-1592389">
    <property type="pathway name" value="Activation of Matrix Metalloproteinases"/>
</dbReference>
<dbReference type="BioGRID-ORCS" id="16616">
    <property type="hits" value="3 hits in 50 CRISPR screens"/>
</dbReference>
<dbReference type="ChiTaRS" id="Klk1b21">
    <property type="organism name" value="mouse"/>
</dbReference>
<dbReference type="PRO" id="PR:Q61759"/>
<dbReference type="Proteomes" id="UP000000589">
    <property type="component" value="Chromosome 7"/>
</dbReference>
<dbReference type="RNAct" id="Q61759">
    <property type="molecule type" value="protein"/>
</dbReference>
<dbReference type="Bgee" id="ENSMUSG00000066516">
    <property type="expression patterns" value="Expressed in submandibular gland and 38 other cell types or tissues"/>
</dbReference>
<dbReference type="ExpressionAtlas" id="Q61759">
    <property type="expression patterns" value="baseline and differential"/>
</dbReference>
<dbReference type="GO" id="GO:0005615">
    <property type="term" value="C:extracellular space"/>
    <property type="evidence" value="ECO:0000314"/>
    <property type="project" value="MGI"/>
</dbReference>
<dbReference type="GO" id="GO:0008233">
    <property type="term" value="F:peptidase activity"/>
    <property type="evidence" value="ECO:0000314"/>
    <property type="project" value="MGI"/>
</dbReference>
<dbReference type="GO" id="GO:0004252">
    <property type="term" value="F:serine-type endopeptidase activity"/>
    <property type="evidence" value="ECO:0007669"/>
    <property type="project" value="UniProtKB-EC"/>
</dbReference>
<dbReference type="GO" id="GO:0006508">
    <property type="term" value="P:proteolysis"/>
    <property type="evidence" value="ECO:0000314"/>
    <property type="project" value="MGI"/>
</dbReference>
<dbReference type="CDD" id="cd00190">
    <property type="entry name" value="Tryp_SPc"/>
    <property type="match status" value="1"/>
</dbReference>
<dbReference type="FunFam" id="2.40.10.10:FF:000032">
    <property type="entry name" value="Kallikrein 1-related peptidase C9"/>
    <property type="match status" value="1"/>
</dbReference>
<dbReference type="FunFam" id="2.40.10.10:FF:000042">
    <property type="entry name" value="Kallikrein 1-related peptidase C9"/>
    <property type="match status" value="1"/>
</dbReference>
<dbReference type="Gene3D" id="2.40.10.10">
    <property type="entry name" value="Trypsin-like serine proteases"/>
    <property type="match status" value="2"/>
</dbReference>
<dbReference type="InterPro" id="IPR009003">
    <property type="entry name" value="Peptidase_S1_PA"/>
</dbReference>
<dbReference type="InterPro" id="IPR043504">
    <property type="entry name" value="Peptidase_S1_PA_chymotrypsin"/>
</dbReference>
<dbReference type="InterPro" id="IPR001314">
    <property type="entry name" value="Peptidase_S1A"/>
</dbReference>
<dbReference type="InterPro" id="IPR001254">
    <property type="entry name" value="Trypsin_dom"/>
</dbReference>
<dbReference type="InterPro" id="IPR018114">
    <property type="entry name" value="TRYPSIN_HIS"/>
</dbReference>
<dbReference type="InterPro" id="IPR033116">
    <property type="entry name" value="TRYPSIN_SER"/>
</dbReference>
<dbReference type="PANTHER" id="PTHR24271:SF47">
    <property type="entry name" value="KALLIKREIN-1"/>
    <property type="match status" value="1"/>
</dbReference>
<dbReference type="PANTHER" id="PTHR24271">
    <property type="entry name" value="KALLIKREIN-RELATED"/>
    <property type="match status" value="1"/>
</dbReference>
<dbReference type="Pfam" id="PF00089">
    <property type="entry name" value="Trypsin"/>
    <property type="match status" value="1"/>
</dbReference>
<dbReference type="PRINTS" id="PR00722">
    <property type="entry name" value="CHYMOTRYPSIN"/>
</dbReference>
<dbReference type="SMART" id="SM00020">
    <property type="entry name" value="Tryp_SPc"/>
    <property type="match status" value="1"/>
</dbReference>
<dbReference type="SUPFAM" id="SSF50494">
    <property type="entry name" value="Trypsin-like serine proteases"/>
    <property type="match status" value="1"/>
</dbReference>
<dbReference type="PROSITE" id="PS50240">
    <property type="entry name" value="TRYPSIN_DOM"/>
    <property type="match status" value="1"/>
</dbReference>
<dbReference type="PROSITE" id="PS00134">
    <property type="entry name" value="TRYPSIN_HIS"/>
    <property type="match status" value="1"/>
</dbReference>
<dbReference type="PROSITE" id="PS00135">
    <property type="entry name" value="TRYPSIN_SER"/>
    <property type="match status" value="1"/>
</dbReference>
<proteinExistence type="evidence at transcript level"/>
<reference evidence="9" key="1">
    <citation type="journal article" date="2000" name="Eur. J. Biochem.">
        <title>Cloning and characterization of mouse Klk27, a novel tissue kallikrein expressed in testicular Leydig cells and exhibiting chymotrypsin-like specificity.</title>
        <authorList>
            <person name="Matsui H."/>
            <person name="Moriyama A."/>
            <person name="Takahashi T."/>
        </authorList>
    </citation>
    <scope>NUCLEOTIDE SEQUENCE</scope>
    <source>
        <tissue evidence="4">Testis</tissue>
    </source>
</reference>
<reference evidence="7" key="2">
    <citation type="journal article" date="2001" name="Endocrinology">
        <title>Mouse testicular Leydig cells express Klk21, a tissue kallikrein that cleaves fibronectin and IGF-binding protein-3.</title>
        <authorList>
            <person name="Matsui H."/>
            <person name="Takahashi T."/>
        </authorList>
    </citation>
    <scope>NUCLEOTIDE SEQUENCE</scope>
    <scope>FUNCTION</scope>
    <scope>ACTIVITY REGULATION</scope>
    <scope>TISSUE SPECIFICITY</scope>
    <scope>DEVELOPMENTAL STAGE</scope>
    <scope>INDUCTION</scope>
    <source>
        <tissue evidence="5">Testis</tissue>
    </source>
</reference>
<reference evidence="8" key="3">
    <citation type="journal article" date="2004" name="Genome Res.">
        <title>The status, quality, and expansion of the NIH full-length cDNA project: the Mammalian Gene Collection (MGC).</title>
        <authorList>
            <consortium name="The MGC Project Team"/>
        </authorList>
    </citation>
    <scope>NUCLEOTIDE SEQUENCE [LARGE SCALE MRNA]</scope>
    <source>
        <strain evidence="8">FVB/N</strain>
        <tissue evidence="8">Salivary gland</tissue>
    </source>
</reference>
<reference evidence="7" key="4">
    <citation type="journal article" date="1987" name="J. Biol. Chem.">
        <title>Mouse glandular kallikrein genes. Structure and partial sequence analysis of the kallikrein gene locus.</title>
        <authorList>
            <person name="Evans B.A."/>
            <person name="Drinkwater C.C."/>
            <person name="Richards R.I."/>
        </authorList>
    </citation>
    <scope>NUCLEOTIDE SEQUENCE OF 17-54 AND 70-122</scope>
    <source>
        <strain evidence="6">BALB/cJ</strain>
        <tissue evidence="6">Liver</tissue>
    </source>
</reference>
<name>K1B21_MOUSE</name>